<proteinExistence type="evidence at protein level"/>
<dbReference type="EC" id="2.4.1.17"/>
<dbReference type="EMBL" id="AK057066">
    <property type="protein sequence ID" value="BAB71358.1"/>
    <property type="molecule type" value="mRNA"/>
</dbReference>
<dbReference type="EMBL" id="AK091977">
    <property type="status" value="NOT_ANNOTATED_CDS"/>
    <property type="molecule type" value="mRNA"/>
</dbReference>
<dbReference type="EMBL" id="AC016612">
    <property type="status" value="NOT_ANNOTATED_CDS"/>
    <property type="molecule type" value="Genomic_DNA"/>
</dbReference>
<dbReference type="EMBL" id="AC112204">
    <property type="status" value="NOT_ANNOTATED_CDS"/>
    <property type="molecule type" value="Genomic_DNA"/>
</dbReference>
<dbReference type="EMBL" id="CH471119">
    <property type="protein sequence ID" value="EAW55928.1"/>
    <property type="molecule type" value="Genomic_DNA"/>
</dbReference>
<dbReference type="EMBL" id="BC035012">
    <property type="protein sequence ID" value="AAH35012.1"/>
    <property type="molecule type" value="mRNA"/>
</dbReference>
<dbReference type="EMBL" id="BC068446">
    <property type="protein sequence ID" value="AAH68446.1"/>
    <property type="molecule type" value="mRNA"/>
</dbReference>
<dbReference type="CCDS" id="CCDS3913.1">
    <molecule id="Q6NUS8-1"/>
</dbReference>
<dbReference type="CCDS" id="CCDS54841.1">
    <molecule id="Q6NUS8-2"/>
</dbReference>
<dbReference type="RefSeq" id="NP_001165344.1">
    <molecule id="Q6NUS8-2"/>
    <property type="nucleotide sequence ID" value="NM_001171873.2"/>
</dbReference>
<dbReference type="RefSeq" id="NP_689617.3">
    <molecule id="Q6NUS8-1"/>
    <property type="nucleotide sequence ID" value="NM_152404.3"/>
</dbReference>
<dbReference type="SMR" id="Q6NUS8"/>
<dbReference type="BioGRID" id="126370">
    <property type="interactions" value="12"/>
</dbReference>
<dbReference type="FunCoup" id="Q6NUS8">
    <property type="interactions" value="13"/>
</dbReference>
<dbReference type="IntAct" id="Q6NUS8">
    <property type="interactions" value="3"/>
</dbReference>
<dbReference type="STRING" id="9606.ENSP00000274278"/>
<dbReference type="DrugBank" id="DB01852">
    <property type="generic name" value="Kaempherol"/>
</dbReference>
<dbReference type="DrugBank" id="DB04216">
    <property type="generic name" value="Quercetin"/>
</dbReference>
<dbReference type="CAZy" id="GT1">
    <property type="family name" value="Glycosyltransferase Family 1"/>
</dbReference>
<dbReference type="GlyCosmos" id="Q6NUS8">
    <property type="glycosylation" value="1 site, No reported glycans"/>
</dbReference>
<dbReference type="GlyGen" id="Q6NUS8">
    <property type="glycosylation" value="1 site, 13 N-linked glycans (1 site)"/>
</dbReference>
<dbReference type="iPTMnet" id="Q6NUS8"/>
<dbReference type="PhosphoSitePlus" id="Q6NUS8"/>
<dbReference type="BioMuta" id="UGT3A1"/>
<dbReference type="DMDM" id="74749002"/>
<dbReference type="jPOST" id="Q6NUS8"/>
<dbReference type="MassIVE" id="Q6NUS8"/>
<dbReference type="PaxDb" id="9606-ENSP00000274278"/>
<dbReference type="PeptideAtlas" id="Q6NUS8"/>
<dbReference type="ProteomicsDB" id="33841"/>
<dbReference type="ProteomicsDB" id="66710">
    <molecule id="Q6NUS8-1"/>
</dbReference>
<dbReference type="Antibodypedia" id="22897">
    <property type="antibodies" value="43 antibodies from 15 providers"/>
</dbReference>
<dbReference type="DNASU" id="133688"/>
<dbReference type="Ensembl" id="ENST00000274278.8">
    <molecule id="Q6NUS8-1"/>
    <property type="protein sequence ID" value="ENSP00000274278.3"/>
    <property type="gene ID" value="ENSG00000145626.12"/>
</dbReference>
<dbReference type="Ensembl" id="ENST00000333811.5">
    <molecule id="Q6NUS8-2"/>
    <property type="protein sequence ID" value="ENSP00000328033.4"/>
    <property type="gene ID" value="ENSG00000145626.12"/>
</dbReference>
<dbReference type="Ensembl" id="ENST00000625798.2">
    <molecule id="Q6NUS8-2"/>
    <property type="protein sequence ID" value="ENSP00000487376.1"/>
    <property type="gene ID" value="ENSG00000145626.12"/>
</dbReference>
<dbReference type="GeneID" id="133688"/>
<dbReference type="KEGG" id="hsa:133688"/>
<dbReference type="MANE-Select" id="ENST00000274278.8">
    <property type="protein sequence ID" value="ENSP00000274278.3"/>
    <property type="RefSeq nucleotide sequence ID" value="NM_152404.4"/>
    <property type="RefSeq protein sequence ID" value="NP_689617.3"/>
</dbReference>
<dbReference type="UCSC" id="uc003jjv.3">
    <molecule id="Q6NUS8-1"/>
    <property type="organism name" value="human"/>
</dbReference>
<dbReference type="AGR" id="HGNC:26625"/>
<dbReference type="CTD" id="133688"/>
<dbReference type="DisGeNET" id="133688"/>
<dbReference type="GeneCards" id="UGT3A1"/>
<dbReference type="HGNC" id="HGNC:26625">
    <property type="gene designation" value="UGT3A1"/>
</dbReference>
<dbReference type="HPA" id="ENSG00000145626">
    <property type="expression patterns" value="Group enriched (kidney, liver)"/>
</dbReference>
<dbReference type="MIM" id="616383">
    <property type="type" value="gene"/>
</dbReference>
<dbReference type="neXtProt" id="NX_Q6NUS8"/>
<dbReference type="OpenTargets" id="ENSG00000145626"/>
<dbReference type="PharmGKB" id="PA142670642"/>
<dbReference type="VEuPathDB" id="HostDB:ENSG00000145626"/>
<dbReference type="eggNOG" id="KOG1192">
    <property type="taxonomic scope" value="Eukaryota"/>
</dbReference>
<dbReference type="GeneTree" id="ENSGT00940000163740"/>
<dbReference type="InParanoid" id="Q6NUS8"/>
<dbReference type="OMA" id="HILLMQR"/>
<dbReference type="OrthoDB" id="5835829at2759"/>
<dbReference type="PAN-GO" id="Q6NUS8">
    <property type="GO annotations" value="2 GO annotations based on evolutionary models"/>
</dbReference>
<dbReference type="PhylomeDB" id="Q6NUS8"/>
<dbReference type="TreeFam" id="TF315472"/>
<dbReference type="BRENDA" id="2.4.1.17">
    <property type="organism ID" value="2681"/>
</dbReference>
<dbReference type="PathwayCommons" id="Q6NUS8"/>
<dbReference type="Reactome" id="R-HSA-156588">
    <property type="pathway name" value="Glucuronidation"/>
</dbReference>
<dbReference type="Reactome" id="R-HSA-9749641">
    <property type="pathway name" value="Aspirin ADME"/>
</dbReference>
<dbReference type="BioGRID-ORCS" id="133688">
    <property type="hits" value="10 hits in 1148 CRISPR screens"/>
</dbReference>
<dbReference type="ChiTaRS" id="UGT3A1">
    <property type="organism name" value="human"/>
</dbReference>
<dbReference type="GenomeRNAi" id="133688"/>
<dbReference type="Pharos" id="Q6NUS8">
    <property type="development level" value="Tdark"/>
</dbReference>
<dbReference type="PRO" id="PR:Q6NUS8"/>
<dbReference type="Proteomes" id="UP000005640">
    <property type="component" value="Chromosome 5"/>
</dbReference>
<dbReference type="RNAct" id="Q6NUS8">
    <property type="molecule type" value="protein"/>
</dbReference>
<dbReference type="Bgee" id="ENSG00000145626">
    <property type="expression patterns" value="Expressed in kidney epithelium and 53 other cell types or tissues"/>
</dbReference>
<dbReference type="ExpressionAtlas" id="Q6NUS8">
    <property type="expression patterns" value="baseline and differential"/>
</dbReference>
<dbReference type="GO" id="GO:0043541">
    <property type="term" value="C:UDP-N-acetylglucosamine transferase complex"/>
    <property type="evidence" value="ECO:0000314"/>
    <property type="project" value="MGI"/>
</dbReference>
<dbReference type="GO" id="GO:0015020">
    <property type="term" value="F:glucuronosyltransferase activity"/>
    <property type="evidence" value="ECO:0000314"/>
    <property type="project" value="MGI"/>
</dbReference>
<dbReference type="GO" id="GO:0008194">
    <property type="term" value="F:UDP-glycosyltransferase activity"/>
    <property type="evidence" value="ECO:0000314"/>
    <property type="project" value="MGI"/>
</dbReference>
<dbReference type="CDD" id="cd03784">
    <property type="entry name" value="GT1_Gtf-like"/>
    <property type="match status" value="1"/>
</dbReference>
<dbReference type="FunFam" id="3.40.50.2000:FF:000094">
    <property type="entry name" value="UDP-glucuronosyltransferase"/>
    <property type="match status" value="1"/>
</dbReference>
<dbReference type="FunFam" id="3.40.50.2000:FF:000155">
    <property type="entry name" value="UDP-glucuronosyltransferase"/>
    <property type="match status" value="1"/>
</dbReference>
<dbReference type="Gene3D" id="3.40.50.2000">
    <property type="entry name" value="Glycogen Phosphorylase B"/>
    <property type="match status" value="2"/>
</dbReference>
<dbReference type="InterPro" id="IPR050271">
    <property type="entry name" value="UDP-glycosyltransferase"/>
</dbReference>
<dbReference type="InterPro" id="IPR002213">
    <property type="entry name" value="UDP_glucos_trans"/>
</dbReference>
<dbReference type="InterPro" id="IPR035595">
    <property type="entry name" value="UDP_glycos_trans_CS"/>
</dbReference>
<dbReference type="PANTHER" id="PTHR48043">
    <property type="entry name" value="EG:EG0003.4 PROTEIN-RELATED"/>
    <property type="match status" value="1"/>
</dbReference>
<dbReference type="PANTHER" id="PTHR48043:SF112">
    <property type="entry name" value="UDP-GLUCURONOSYLTRANSFERASE 3A1"/>
    <property type="match status" value="1"/>
</dbReference>
<dbReference type="Pfam" id="PF00201">
    <property type="entry name" value="UDPGT"/>
    <property type="match status" value="1"/>
</dbReference>
<dbReference type="SUPFAM" id="SSF53756">
    <property type="entry name" value="UDP-Glycosyltransferase/glycogen phosphorylase"/>
    <property type="match status" value="1"/>
</dbReference>
<dbReference type="PROSITE" id="PS00375">
    <property type="entry name" value="UDPGT"/>
    <property type="match status" value="1"/>
</dbReference>
<sequence>MVGQRVLLLVAFLLSGVLLSEAAKILTISTLGGSHYLLLDRVSQILQEHGHNVTMLHQSGKFLIPDIKEEEKSYQVIRWFSPEDHQKRIKKHFDSYIETALDGRKESEALVKLMEIFGTQCSYLLSRKDIMDSLKNENYDLVFVEAFDFCSFLIAEKLVKPFVAILPTTFGSLDFGLPSPLSYVPVFPSLLTDHMDFWGRVKNFLMFFSFSRSQWDMQSTFDNTIKEHFPEGSRPVLSHLLLKAELWFVNSDFAFDFARPLLPNTVYIGGLMEKPIKPVPQDLDNFIANFGDAGFVLVAFGSMLNTHQSQEVLKKMHNAFAHLPQGVIWTCQSSHWPRDVHLATNVKIVDWLPQSDLLAHPSIRLFVTHGGQNSVMEAIRHGVPMVGLPVNGDQHGNMVRVVAKNYGVSIRLNQVTADTLTLTMKQVIEDKRYKSAVVAASVILHSQPLSPAQRLVGWIDHILQTGGATHLKPYAFQQPWHEQYLIDVFVFLLGLTLGTMWLCGKLLGVVARWLRGARKVKKT</sequence>
<organism>
    <name type="scientific">Homo sapiens</name>
    <name type="common">Human</name>
    <dbReference type="NCBI Taxonomy" id="9606"/>
    <lineage>
        <taxon>Eukaryota</taxon>
        <taxon>Metazoa</taxon>
        <taxon>Chordata</taxon>
        <taxon>Craniata</taxon>
        <taxon>Vertebrata</taxon>
        <taxon>Euteleostomi</taxon>
        <taxon>Mammalia</taxon>
        <taxon>Eutheria</taxon>
        <taxon>Euarchontoglires</taxon>
        <taxon>Primates</taxon>
        <taxon>Haplorrhini</taxon>
        <taxon>Catarrhini</taxon>
        <taxon>Hominidae</taxon>
        <taxon>Homo</taxon>
    </lineage>
</organism>
<gene>
    <name type="primary">UGT3A1</name>
</gene>
<protein>
    <recommendedName>
        <fullName>UDP-glucuronosyltransferase 3A1</fullName>
        <shortName>UDPGT 3A1</shortName>
        <ecNumber>2.4.1.17</ecNumber>
    </recommendedName>
</protein>
<evidence type="ECO:0000250" key="1"/>
<evidence type="ECO:0000255" key="2"/>
<evidence type="ECO:0000303" key="3">
    <source>
    </source>
</evidence>
<evidence type="ECO:0000305" key="4"/>
<comment type="function">
    <text evidence="1">UDP-glucuronosyltransferases catalyze phase II biotransformation reactions in which lipophilic substrates are conjugated with glucuronic acid to increase water solubility and enhance excretion. They are of major importance in the conjugation and subsequent elimination of potentially toxic xenobiotics and endogenous compounds (By similarity).</text>
</comment>
<comment type="catalytic activity">
    <reaction>
        <text>glucuronate acceptor + UDP-alpha-D-glucuronate = acceptor beta-D-glucuronoside + UDP + H(+)</text>
        <dbReference type="Rhea" id="RHEA:21032"/>
        <dbReference type="ChEBI" id="CHEBI:15378"/>
        <dbReference type="ChEBI" id="CHEBI:58052"/>
        <dbReference type="ChEBI" id="CHEBI:58223"/>
        <dbReference type="ChEBI" id="CHEBI:132367"/>
        <dbReference type="ChEBI" id="CHEBI:132368"/>
        <dbReference type="EC" id="2.4.1.17"/>
    </reaction>
</comment>
<comment type="subcellular location">
    <subcellularLocation>
        <location evidence="4">Membrane</location>
        <topology evidence="4">Single-pass type I membrane protein</topology>
    </subcellularLocation>
</comment>
<comment type="alternative products">
    <event type="alternative splicing"/>
    <isoform>
        <id>Q6NUS8-1</id>
        <name>1</name>
        <sequence type="displayed"/>
    </isoform>
    <isoform>
        <id>Q6NUS8-2</id>
        <name>2</name>
        <sequence type="described" ref="VSP_044985 VSP_044986 VSP_044987"/>
    </isoform>
</comment>
<comment type="similarity">
    <text evidence="4">Belongs to the UDP-glycosyltransferase family.</text>
</comment>
<reference key="1">
    <citation type="journal article" date="2004" name="Nat. Genet.">
        <title>Complete sequencing and characterization of 21,243 full-length human cDNAs.</title>
        <authorList>
            <person name="Ota T."/>
            <person name="Suzuki Y."/>
            <person name="Nishikawa T."/>
            <person name="Otsuki T."/>
            <person name="Sugiyama T."/>
            <person name="Irie R."/>
            <person name="Wakamatsu A."/>
            <person name="Hayashi K."/>
            <person name="Sato H."/>
            <person name="Nagai K."/>
            <person name="Kimura K."/>
            <person name="Makita H."/>
            <person name="Sekine M."/>
            <person name="Obayashi M."/>
            <person name="Nishi T."/>
            <person name="Shibahara T."/>
            <person name="Tanaka T."/>
            <person name="Ishii S."/>
            <person name="Yamamoto J."/>
            <person name="Saito K."/>
            <person name="Kawai Y."/>
            <person name="Isono Y."/>
            <person name="Nakamura Y."/>
            <person name="Nagahari K."/>
            <person name="Murakami K."/>
            <person name="Yasuda T."/>
            <person name="Iwayanagi T."/>
            <person name="Wagatsuma M."/>
            <person name="Shiratori A."/>
            <person name="Sudo H."/>
            <person name="Hosoiri T."/>
            <person name="Kaku Y."/>
            <person name="Kodaira H."/>
            <person name="Kondo H."/>
            <person name="Sugawara M."/>
            <person name="Takahashi M."/>
            <person name="Kanda K."/>
            <person name="Yokoi T."/>
            <person name="Furuya T."/>
            <person name="Kikkawa E."/>
            <person name="Omura Y."/>
            <person name="Abe K."/>
            <person name="Kamihara K."/>
            <person name="Katsuta N."/>
            <person name="Sato K."/>
            <person name="Tanikawa M."/>
            <person name="Yamazaki M."/>
            <person name="Ninomiya K."/>
            <person name="Ishibashi T."/>
            <person name="Yamashita H."/>
            <person name="Murakawa K."/>
            <person name="Fujimori K."/>
            <person name="Tanai H."/>
            <person name="Kimata M."/>
            <person name="Watanabe M."/>
            <person name="Hiraoka S."/>
            <person name="Chiba Y."/>
            <person name="Ishida S."/>
            <person name="Ono Y."/>
            <person name="Takiguchi S."/>
            <person name="Watanabe S."/>
            <person name="Yosida M."/>
            <person name="Hotuta T."/>
            <person name="Kusano J."/>
            <person name="Kanehori K."/>
            <person name="Takahashi-Fujii A."/>
            <person name="Hara H."/>
            <person name="Tanase T.-O."/>
            <person name="Nomura Y."/>
            <person name="Togiya S."/>
            <person name="Komai F."/>
            <person name="Hara R."/>
            <person name="Takeuchi K."/>
            <person name="Arita M."/>
            <person name="Imose N."/>
            <person name="Musashino K."/>
            <person name="Yuuki H."/>
            <person name="Oshima A."/>
            <person name="Sasaki N."/>
            <person name="Aotsuka S."/>
            <person name="Yoshikawa Y."/>
            <person name="Matsunawa H."/>
            <person name="Ichihara T."/>
            <person name="Shiohata N."/>
            <person name="Sano S."/>
            <person name="Moriya S."/>
            <person name="Momiyama H."/>
            <person name="Satoh N."/>
            <person name="Takami S."/>
            <person name="Terashima Y."/>
            <person name="Suzuki O."/>
            <person name="Nakagawa S."/>
            <person name="Senoh A."/>
            <person name="Mizoguchi H."/>
            <person name="Goto Y."/>
            <person name="Shimizu F."/>
            <person name="Wakebe H."/>
            <person name="Hishigaki H."/>
            <person name="Watanabe T."/>
            <person name="Sugiyama A."/>
            <person name="Takemoto M."/>
            <person name="Kawakami B."/>
            <person name="Yamazaki M."/>
            <person name="Watanabe K."/>
            <person name="Kumagai A."/>
            <person name="Itakura S."/>
            <person name="Fukuzumi Y."/>
            <person name="Fujimori Y."/>
            <person name="Komiyama M."/>
            <person name="Tashiro H."/>
            <person name="Tanigami A."/>
            <person name="Fujiwara T."/>
            <person name="Ono T."/>
            <person name="Yamada K."/>
            <person name="Fujii Y."/>
            <person name="Ozaki K."/>
            <person name="Hirao M."/>
            <person name="Ohmori Y."/>
            <person name="Kawabata A."/>
            <person name="Hikiji T."/>
            <person name="Kobatake N."/>
            <person name="Inagaki H."/>
            <person name="Ikema Y."/>
            <person name="Okamoto S."/>
            <person name="Okitani R."/>
            <person name="Kawakami T."/>
            <person name="Noguchi S."/>
            <person name="Itoh T."/>
            <person name="Shigeta K."/>
            <person name="Senba T."/>
            <person name="Matsumura K."/>
            <person name="Nakajima Y."/>
            <person name="Mizuno T."/>
            <person name="Morinaga M."/>
            <person name="Sasaki M."/>
            <person name="Togashi T."/>
            <person name="Oyama M."/>
            <person name="Hata H."/>
            <person name="Watanabe M."/>
            <person name="Komatsu T."/>
            <person name="Mizushima-Sugano J."/>
            <person name="Satoh T."/>
            <person name="Shirai Y."/>
            <person name="Takahashi Y."/>
            <person name="Nakagawa K."/>
            <person name="Okumura K."/>
            <person name="Nagase T."/>
            <person name="Nomura N."/>
            <person name="Kikuchi H."/>
            <person name="Masuho Y."/>
            <person name="Yamashita R."/>
            <person name="Nakai K."/>
            <person name="Yada T."/>
            <person name="Nakamura Y."/>
            <person name="Ohara O."/>
            <person name="Isogai T."/>
            <person name="Sugano S."/>
        </authorList>
    </citation>
    <scope>NUCLEOTIDE SEQUENCE [LARGE SCALE MRNA] (ISOFORM 1)</scope>
    <source>
        <tissue>Kidney</tissue>
        <tissue>Small intestine</tissue>
    </source>
</reference>
<reference key="2">
    <citation type="journal article" date="2004" name="Nature">
        <title>The DNA sequence and comparative analysis of human chromosome 5.</title>
        <authorList>
            <person name="Schmutz J."/>
            <person name="Martin J."/>
            <person name="Terry A."/>
            <person name="Couronne O."/>
            <person name="Grimwood J."/>
            <person name="Lowry S."/>
            <person name="Gordon L.A."/>
            <person name="Scott D."/>
            <person name="Xie G."/>
            <person name="Huang W."/>
            <person name="Hellsten U."/>
            <person name="Tran-Gyamfi M."/>
            <person name="She X."/>
            <person name="Prabhakar S."/>
            <person name="Aerts A."/>
            <person name="Altherr M."/>
            <person name="Bajorek E."/>
            <person name="Black S."/>
            <person name="Branscomb E."/>
            <person name="Caoile C."/>
            <person name="Challacombe J.F."/>
            <person name="Chan Y.M."/>
            <person name="Denys M."/>
            <person name="Detter J.C."/>
            <person name="Escobar J."/>
            <person name="Flowers D."/>
            <person name="Fotopulos D."/>
            <person name="Glavina T."/>
            <person name="Gomez M."/>
            <person name="Gonzales E."/>
            <person name="Goodstein D."/>
            <person name="Grigoriev I."/>
            <person name="Groza M."/>
            <person name="Hammon N."/>
            <person name="Hawkins T."/>
            <person name="Haydu L."/>
            <person name="Israni S."/>
            <person name="Jett J."/>
            <person name="Kadner K."/>
            <person name="Kimball H."/>
            <person name="Kobayashi A."/>
            <person name="Lopez F."/>
            <person name="Lou Y."/>
            <person name="Martinez D."/>
            <person name="Medina C."/>
            <person name="Morgan J."/>
            <person name="Nandkeshwar R."/>
            <person name="Noonan J.P."/>
            <person name="Pitluck S."/>
            <person name="Pollard M."/>
            <person name="Predki P."/>
            <person name="Priest J."/>
            <person name="Ramirez L."/>
            <person name="Retterer J."/>
            <person name="Rodriguez A."/>
            <person name="Rogers S."/>
            <person name="Salamov A."/>
            <person name="Salazar A."/>
            <person name="Thayer N."/>
            <person name="Tice H."/>
            <person name="Tsai M."/>
            <person name="Ustaszewska A."/>
            <person name="Vo N."/>
            <person name="Wheeler J."/>
            <person name="Wu K."/>
            <person name="Yang J."/>
            <person name="Dickson M."/>
            <person name="Cheng J.-F."/>
            <person name="Eichler E.E."/>
            <person name="Olsen A."/>
            <person name="Pennacchio L.A."/>
            <person name="Rokhsar D.S."/>
            <person name="Richardson P."/>
            <person name="Lucas S.M."/>
            <person name="Myers R.M."/>
            <person name="Rubin E.M."/>
        </authorList>
    </citation>
    <scope>NUCLEOTIDE SEQUENCE [LARGE SCALE GENOMIC DNA]</scope>
</reference>
<reference key="3">
    <citation type="submission" date="2005-07" db="EMBL/GenBank/DDBJ databases">
        <authorList>
            <person name="Mural R.J."/>
            <person name="Istrail S."/>
            <person name="Sutton G."/>
            <person name="Florea L."/>
            <person name="Halpern A.L."/>
            <person name="Mobarry C.M."/>
            <person name="Lippert R."/>
            <person name="Walenz B."/>
            <person name="Shatkay H."/>
            <person name="Dew I."/>
            <person name="Miller J.R."/>
            <person name="Flanigan M.J."/>
            <person name="Edwards N.J."/>
            <person name="Bolanos R."/>
            <person name="Fasulo D."/>
            <person name="Halldorsson B.V."/>
            <person name="Hannenhalli S."/>
            <person name="Turner R."/>
            <person name="Yooseph S."/>
            <person name="Lu F."/>
            <person name="Nusskern D.R."/>
            <person name="Shue B.C."/>
            <person name="Zheng X.H."/>
            <person name="Zhong F."/>
            <person name="Delcher A.L."/>
            <person name="Huson D.H."/>
            <person name="Kravitz S.A."/>
            <person name="Mouchard L."/>
            <person name="Reinert K."/>
            <person name="Remington K.A."/>
            <person name="Clark A.G."/>
            <person name="Waterman M.S."/>
            <person name="Eichler E.E."/>
            <person name="Adams M.D."/>
            <person name="Hunkapiller M.W."/>
            <person name="Myers E.W."/>
            <person name="Venter J.C."/>
        </authorList>
    </citation>
    <scope>NUCLEOTIDE SEQUENCE [LARGE SCALE GENOMIC DNA]</scope>
</reference>
<reference key="4">
    <citation type="journal article" date="2004" name="Genome Res.">
        <title>The status, quality, and expansion of the NIH full-length cDNA project: the Mammalian Gene Collection (MGC).</title>
        <authorList>
            <consortium name="The MGC Project Team"/>
        </authorList>
    </citation>
    <scope>NUCLEOTIDE SEQUENCE [LARGE SCALE MRNA] (ISOFORMS 1 AND 2)</scope>
    <source>
        <tissue>Testis</tissue>
    </source>
</reference>
<feature type="signal peptide" evidence="2">
    <location>
        <begin position="1"/>
        <end position="22"/>
    </location>
</feature>
<feature type="chain" id="PRO_0000299150" description="UDP-glucuronosyltransferase 3A1">
    <location>
        <begin position="23"/>
        <end position="523"/>
    </location>
</feature>
<feature type="topological domain" description="Extracellular" evidence="2">
    <location>
        <begin position="23"/>
        <end position="483"/>
    </location>
</feature>
<feature type="transmembrane region" description="Helical" evidence="2">
    <location>
        <begin position="484"/>
        <end position="504"/>
    </location>
</feature>
<feature type="topological domain" description="Cytoplasmic" evidence="2">
    <location>
        <begin position="505"/>
        <end position="523"/>
    </location>
</feature>
<feature type="glycosylation site" description="N-linked (GlcNAc...) asparagine" evidence="2">
    <location>
        <position position="52"/>
    </location>
</feature>
<feature type="splice variant" id="VSP_044985" description="In isoform 2." evidence="3">
    <location>
        <begin position="1"/>
        <end position="54"/>
    </location>
</feature>
<feature type="splice variant" id="VSP_044986" description="In isoform 2." evidence="3">
    <original>DLDNFIANFGDAGFVLVAFGSMLNT</original>
    <variation>NGQPALFTTPSLFSSGVYPEPLRWL</variation>
    <location>
        <begin position="282"/>
        <end position="306"/>
    </location>
</feature>
<feature type="splice variant" id="VSP_044987" description="In isoform 2." evidence="3">
    <location>
        <begin position="307"/>
        <end position="523"/>
    </location>
</feature>
<feature type="sequence variant" id="VAR_034791" description="In dbSNP:rs3756669.">
    <original>C</original>
    <variation>G</variation>
    <location>
        <position position="121"/>
    </location>
</feature>
<feature type="sequence conflict" description="In Ref. 1; BAB71358." evidence="4" ref="1">
    <original>Y</original>
    <variation>C</variation>
    <location>
        <position position="139"/>
    </location>
</feature>
<feature type="sequence conflict" description="In Ref. 1; BAB71358." evidence="4" ref="1">
    <original>A</original>
    <variation>T</variation>
    <location>
        <position position="378"/>
    </location>
</feature>
<feature type="sequence conflict" description="In Ref. 1; BAB71358." evidence="4" ref="1">
    <original>A</original>
    <variation>V</variation>
    <location>
        <position position="475"/>
    </location>
</feature>
<feature type="sequence conflict" description="In Ref. 2; AAH35012." evidence="4" ref="2">
    <original>W</original>
    <variation>R</variation>
    <location sequence="Q6NUS8-2">
        <position position="251"/>
    </location>
</feature>
<accession>Q6NUS8</accession>
<accession>G5E961</accession>
<accession>Q8IYS9</accession>
<accession>Q8NAW4</accession>
<accession>Q96DM6</accession>
<name>UD3A1_HUMAN</name>
<keyword id="KW-0025">Alternative splicing</keyword>
<keyword id="KW-0325">Glycoprotein</keyword>
<keyword id="KW-0328">Glycosyltransferase</keyword>
<keyword id="KW-0472">Membrane</keyword>
<keyword id="KW-1267">Proteomics identification</keyword>
<keyword id="KW-1185">Reference proteome</keyword>
<keyword id="KW-0732">Signal</keyword>
<keyword id="KW-0808">Transferase</keyword>
<keyword id="KW-0812">Transmembrane</keyword>
<keyword id="KW-1133">Transmembrane helix</keyword>